<name>MYG_SCOJP</name>
<keyword id="KW-0963">Cytoplasm</keyword>
<keyword id="KW-0349">Heme</keyword>
<keyword id="KW-0408">Iron</keyword>
<keyword id="KW-0479">Metal-binding</keyword>
<keyword id="KW-0514">Muscle protein</keyword>
<keyword id="KW-0560">Oxidoreductase</keyword>
<keyword id="KW-0561">Oxygen transport</keyword>
<keyword id="KW-0813">Transport</keyword>
<sequence>MADFDAVLKFWGPVEADYDKIGNMVLTRLFTEHPDTQKLFPKFAGIGLGDMAGNAAISAHGATVLKKLAEVLKAKGNHAGIIKPLANSHATKHKIAINNFKLITEIIVKVMQEKAGLDAGGQTALRNVMGVFIADMDANYKELGFSG</sequence>
<protein>
    <recommendedName>
        <fullName>Myoglobin</fullName>
    </recommendedName>
    <alternativeName>
        <fullName evidence="2">Nitrite reductase MB</fullName>
        <ecNumber evidence="2">1.7.-.-</ecNumber>
    </alternativeName>
    <alternativeName>
        <fullName evidence="2">Pseudoperoxidase MB</fullName>
        <ecNumber evidence="2">1.11.1.-</ecNumber>
    </alternativeName>
</protein>
<feature type="initiator methionine" description="Removed" evidence="1">
    <location>
        <position position="1"/>
    </location>
</feature>
<feature type="chain" id="PRO_0000053372" description="Myoglobin">
    <location>
        <begin position="2"/>
        <end position="147"/>
    </location>
</feature>
<feature type="domain" description="Globin" evidence="6">
    <location>
        <begin position="2"/>
        <end position="141"/>
    </location>
</feature>
<feature type="binding site" evidence="5">
    <location>
        <position position="60"/>
    </location>
    <ligand>
        <name>nitrite</name>
        <dbReference type="ChEBI" id="CHEBI:16301"/>
    </ligand>
</feature>
<feature type="binding site" evidence="4 6">
    <location>
        <position position="60"/>
    </location>
    <ligand>
        <name>O2</name>
        <dbReference type="ChEBI" id="CHEBI:15379"/>
    </ligand>
</feature>
<feature type="binding site" description="proximal binding residue" evidence="2">
    <location>
        <position position="89"/>
    </location>
    <ligand>
        <name>heme b</name>
        <dbReference type="ChEBI" id="CHEBI:60344"/>
    </ligand>
    <ligandPart>
        <name>Fe</name>
        <dbReference type="ChEBI" id="CHEBI:18248"/>
    </ligandPart>
</feature>
<evidence type="ECO:0000250" key="1"/>
<evidence type="ECO:0000250" key="2">
    <source>
        <dbReference type="UniProtKB" id="P02144"/>
    </source>
</evidence>
<evidence type="ECO:0000250" key="3">
    <source>
        <dbReference type="UniProtKB" id="P02185"/>
    </source>
</evidence>
<evidence type="ECO:0000250" key="4">
    <source>
        <dbReference type="UniProtKB" id="P02189"/>
    </source>
</evidence>
<evidence type="ECO:0000250" key="5">
    <source>
        <dbReference type="UniProtKB" id="P68082"/>
    </source>
</evidence>
<evidence type="ECO:0000255" key="6">
    <source>
        <dbReference type="PROSITE-ProRule" id="PRU00238"/>
    </source>
</evidence>
<dbReference type="EC" id="1.7.-.-" evidence="2"/>
<dbReference type="EC" id="1.11.1.-" evidence="2"/>
<dbReference type="EMBL" id="AF291835">
    <property type="protein sequence ID" value="AAG02109.1"/>
    <property type="molecule type" value="mRNA"/>
</dbReference>
<dbReference type="SMR" id="Q9DGI9"/>
<dbReference type="GO" id="GO:0070062">
    <property type="term" value="C:extracellular exosome"/>
    <property type="evidence" value="ECO:0007669"/>
    <property type="project" value="TreeGrafter"/>
</dbReference>
<dbReference type="GO" id="GO:0016528">
    <property type="term" value="C:sarcoplasm"/>
    <property type="evidence" value="ECO:0000250"/>
    <property type="project" value="UniProtKB"/>
</dbReference>
<dbReference type="GO" id="GO:0020037">
    <property type="term" value="F:heme binding"/>
    <property type="evidence" value="ECO:0007669"/>
    <property type="project" value="InterPro"/>
</dbReference>
<dbReference type="GO" id="GO:0046872">
    <property type="term" value="F:metal ion binding"/>
    <property type="evidence" value="ECO:0007669"/>
    <property type="project" value="UniProtKB-KW"/>
</dbReference>
<dbReference type="GO" id="GO:0098809">
    <property type="term" value="F:nitrite reductase activity"/>
    <property type="evidence" value="ECO:0000250"/>
    <property type="project" value="UniProtKB"/>
</dbReference>
<dbReference type="GO" id="GO:0019825">
    <property type="term" value="F:oxygen binding"/>
    <property type="evidence" value="ECO:0007669"/>
    <property type="project" value="InterPro"/>
</dbReference>
<dbReference type="GO" id="GO:0005344">
    <property type="term" value="F:oxygen carrier activity"/>
    <property type="evidence" value="ECO:0000250"/>
    <property type="project" value="UniProtKB"/>
</dbReference>
<dbReference type="GO" id="GO:0004601">
    <property type="term" value="F:peroxidase activity"/>
    <property type="evidence" value="ECO:0000250"/>
    <property type="project" value="UniProtKB"/>
</dbReference>
<dbReference type="GO" id="GO:0019430">
    <property type="term" value="P:removal of superoxide radicals"/>
    <property type="evidence" value="ECO:0000250"/>
    <property type="project" value="UniProtKB"/>
</dbReference>
<dbReference type="Gene3D" id="6.10.140.2100">
    <property type="match status" value="1"/>
</dbReference>
<dbReference type="Gene3D" id="6.10.140.2110">
    <property type="match status" value="1"/>
</dbReference>
<dbReference type="InterPro" id="IPR000971">
    <property type="entry name" value="Globin"/>
</dbReference>
<dbReference type="InterPro" id="IPR009050">
    <property type="entry name" value="Globin-like_sf"/>
</dbReference>
<dbReference type="InterPro" id="IPR002335">
    <property type="entry name" value="Myoglobin"/>
</dbReference>
<dbReference type="PANTHER" id="PTHR47132">
    <property type="entry name" value="MYOGLOBIN"/>
    <property type="match status" value="1"/>
</dbReference>
<dbReference type="PANTHER" id="PTHR47132:SF1">
    <property type="entry name" value="MYOGLOBIN"/>
    <property type="match status" value="1"/>
</dbReference>
<dbReference type="Pfam" id="PF00042">
    <property type="entry name" value="Globin"/>
    <property type="match status" value="1"/>
</dbReference>
<dbReference type="PRINTS" id="PR00613">
    <property type="entry name" value="MYOGLOBIN"/>
</dbReference>
<dbReference type="SUPFAM" id="SSF46458">
    <property type="entry name" value="Globin-like"/>
    <property type="match status" value="1"/>
</dbReference>
<dbReference type="PROSITE" id="PS01033">
    <property type="entry name" value="GLOBIN"/>
    <property type="match status" value="1"/>
</dbReference>
<accession>Q9DGI9</accession>
<proteinExistence type="evidence at transcript level"/>
<comment type="function">
    <text evidence="2">Monomeric heme protein which primary function is to store oxygen and facilitate its diffusion within muscle tissues. Reversibly binds oxygen through a pentacoordinated heme iron and enables its timely and efficient release as needed during periods of heightened demand. Depending on the oxidative conditions of tissues and cells, and in addition to its ability to bind oxygen, it also has a nitrite reductase activity whereby it regulates the production of bioactive nitric oxide. Under stress conditions, like hypoxia and anoxia, it also protects cells against reactive oxygen species thanks to its pseudoperoxidase activity.</text>
</comment>
<comment type="catalytic activity">
    <reaction evidence="2">
        <text>Fe(III)-heme b-[protein] + nitric oxide + H2O = Fe(II)-heme b-[protein] + nitrite + 2 H(+)</text>
        <dbReference type="Rhea" id="RHEA:77711"/>
        <dbReference type="Rhea" id="RHEA-COMP:18975"/>
        <dbReference type="Rhea" id="RHEA-COMP:18976"/>
        <dbReference type="ChEBI" id="CHEBI:15377"/>
        <dbReference type="ChEBI" id="CHEBI:15378"/>
        <dbReference type="ChEBI" id="CHEBI:16301"/>
        <dbReference type="ChEBI" id="CHEBI:16480"/>
        <dbReference type="ChEBI" id="CHEBI:55376"/>
        <dbReference type="ChEBI" id="CHEBI:60344"/>
    </reaction>
    <physiologicalReaction direction="right-to-left" evidence="2">
        <dbReference type="Rhea" id="RHEA:77713"/>
    </physiologicalReaction>
</comment>
<comment type="catalytic activity">
    <reaction evidence="2">
        <text>H2O2 + AH2 = A + 2 H2O</text>
        <dbReference type="Rhea" id="RHEA:30275"/>
        <dbReference type="ChEBI" id="CHEBI:13193"/>
        <dbReference type="ChEBI" id="CHEBI:15377"/>
        <dbReference type="ChEBI" id="CHEBI:16240"/>
        <dbReference type="ChEBI" id="CHEBI:17499"/>
    </reaction>
</comment>
<comment type="subunit">
    <text evidence="3">Monomeric.</text>
</comment>
<comment type="subcellular location">
    <subcellularLocation>
        <location evidence="2">Cytoplasm</location>
        <location evidence="2">Sarcoplasm</location>
    </subcellularLocation>
</comment>
<comment type="similarity">
    <text evidence="6">Belongs to the globin family.</text>
</comment>
<reference key="1">
    <citation type="journal article" date="2001" name="Am. J. Physiol.">
        <title>Oxygen affinity and amino acid sequence of myoglobins from endothermic and ectothermic fish.</title>
        <authorList>
            <person name="Marcinek D.J."/>
            <person name="Bonaventura J."/>
            <person name="Wittenberg J.B."/>
            <person name="Block B.A."/>
        </authorList>
    </citation>
    <scope>NUCLEOTIDE SEQUENCE [MRNA]</scope>
    <source>
        <tissue>Skeletal muscle</tissue>
    </source>
</reference>
<gene>
    <name type="primary">mb</name>
</gene>
<organism>
    <name type="scientific">Scomber japonicus</name>
    <name type="common">Chub mackerel</name>
    <dbReference type="NCBI Taxonomy" id="13676"/>
    <lineage>
        <taxon>Eukaryota</taxon>
        <taxon>Metazoa</taxon>
        <taxon>Chordata</taxon>
        <taxon>Craniata</taxon>
        <taxon>Vertebrata</taxon>
        <taxon>Euteleostomi</taxon>
        <taxon>Actinopterygii</taxon>
        <taxon>Neopterygii</taxon>
        <taxon>Teleostei</taxon>
        <taxon>Neoteleostei</taxon>
        <taxon>Acanthomorphata</taxon>
        <taxon>Pelagiaria</taxon>
        <taxon>Scombriformes</taxon>
        <taxon>Scombridae</taxon>
        <taxon>Scomber</taxon>
    </lineage>
</organism>